<keyword id="KW-0963">Cytoplasm</keyword>
<keyword id="KW-0488">Methylation</keyword>
<keyword id="KW-0648">Protein biosynthesis</keyword>
<gene>
    <name evidence="1" type="primary">prfA</name>
    <name type="ordered locus">Bcer98_3850</name>
</gene>
<accession>A7GV79</accession>
<name>RF1_BACCN</name>
<protein>
    <recommendedName>
        <fullName evidence="1">Peptide chain release factor 1</fullName>
        <shortName evidence="1">RF-1</shortName>
    </recommendedName>
</protein>
<dbReference type="EMBL" id="CP000764">
    <property type="protein sequence ID" value="ABS24037.1"/>
    <property type="molecule type" value="Genomic_DNA"/>
</dbReference>
<dbReference type="RefSeq" id="WP_012096296.1">
    <property type="nucleotide sequence ID" value="NC_009674.1"/>
</dbReference>
<dbReference type="SMR" id="A7GV79"/>
<dbReference type="STRING" id="315749.Bcer98_3850"/>
<dbReference type="GeneID" id="33899089"/>
<dbReference type="KEGG" id="bcy:Bcer98_3850"/>
<dbReference type="eggNOG" id="COG0216">
    <property type="taxonomic scope" value="Bacteria"/>
</dbReference>
<dbReference type="HOGENOM" id="CLU_036856_0_1_9"/>
<dbReference type="OrthoDB" id="9806673at2"/>
<dbReference type="Proteomes" id="UP000002300">
    <property type="component" value="Chromosome"/>
</dbReference>
<dbReference type="GO" id="GO:0005737">
    <property type="term" value="C:cytoplasm"/>
    <property type="evidence" value="ECO:0007669"/>
    <property type="project" value="UniProtKB-SubCell"/>
</dbReference>
<dbReference type="GO" id="GO:0016149">
    <property type="term" value="F:translation release factor activity, codon specific"/>
    <property type="evidence" value="ECO:0007669"/>
    <property type="project" value="UniProtKB-UniRule"/>
</dbReference>
<dbReference type="FunFam" id="3.30.160.20:FF:000004">
    <property type="entry name" value="Peptide chain release factor 1"/>
    <property type="match status" value="1"/>
</dbReference>
<dbReference type="FunFam" id="3.30.70.1660:FF:000002">
    <property type="entry name" value="Peptide chain release factor 1"/>
    <property type="match status" value="1"/>
</dbReference>
<dbReference type="FunFam" id="3.30.70.1660:FF:000004">
    <property type="entry name" value="Peptide chain release factor 1"/>
    <property type="match status" value="1"/>
</dbReference>
<dbReference type="Gene3D" id="3.30.160.20">
    <property type="match status" value="1"/>
</dbReference>
<dbReference type="Gene3D" id="3.30.70.1660">
    <property type="match status" value="1"/>
</dbReference>
<dbReference type="Gene3D" id="6.10.140.1950">
    <property type="match status" value="1"/>
</dbReference>
<dbReference type="HAMAP" id="MF_00093">
    <property type="entry name" value="Rel_fac_1"/>
    <property type="match status" value="1"/>
</dbReference>
<dbReference type="InterPro" id="IPR005139">
    <property type="entry name" value="PCRF"/>
</dbReference>
<dbReference type="InterPro" id="IPR000352">
    <property type="entry name" value="Pep_chain_release_fac_I"/>
</dbReference>
<dbReference type="InterPro" id="IPR045853">
    <property type="entry name" value="Pep_chain_release_fac_I_sf"/>
</dbReference>
<dbReference type="InterPro" id="IPR050057">
    <property type="entry name" value="Prokaryotic/Mito_RF"/>
</dbReference>
<dbReference type="InterPro" id="IPR004373">
    <property type="entry name" value="RF-1"/>
</dbReference>
<dbReference type="NCBIfam" id="TIGR00019">
    <property type="entry name" value="prfA"/>
    <property type="match status" value="1"/>
</dbReference>
<dbReference type="NCBIfam" id="NF001859">
    <property type="entry name" value="PRK00591.1"/>
    <property type="match status" value="1"/>
</dbReference>
<dbReference type="PANTHER" id="PTHR43804">
    <property type="entry name" value="LD18447P"/>
    <property type="match status" value="1"/>
</dbReference>
<dbReference type="PANTHER" id="PTHR43804:SF7">
    <property type="entry name" value="LD18447P"/>
    <property type="match status" value="1"/>
</dbReference>
<dbReference type="Pfam" id="PF03462">
    <property type="entry name" value="PCRF"/>
    <property type="match status" value="1"/>
</dbReference>
<dbReference type="Pfam" id="PF00472">
    <property type="entry name" value="RF-1"/>
    <property type="match status" value="1"/>
</dbReference>
<dbReference type="SMART" id="SM00937">
    <property type="entry name" value="PCRF"/>
    <property type="match status" value="1"/>
</dbReference>
<dbReference type="SUPFAM" id="SSF75620">
    <property type="entry name" value="Release factor"/>
    <property type="match status" value="1"/>
</dbReference>
<dbReference type="PROSITE" id="PS00745">
    <property type="entry name" value="RF_PROK_I"/>
    <property type="match status" value="1"/>
</dbReference>
<feature type="chain" id="PRO_1000075482" description="Peptide chain release factor 1">
    <location>
        <begin position="1"/>
        <end position="355"/>
    </location>
</feature>
<feature type="modified residue" description="N5-methylglutamine" evidence="1">
    <location>
        <position position="233"/>
    </location>
</feature>
<evidence type="ECO:0000255" key="1">
    <source>
        <dbReference type="HAMAP-Rule" id="MF_00093"/>
    </source>
</evidence>
<comment type="function">
    <text evidence="1">Peptide chain release factor 1 directs the termination of translation in response to the peptide chain termination codons UAG and UAA.</text>
</comment>
<comment type="subcellular location">
    <subcellularLocation>
        <location evidence="1">Cytoplasm</location>
    </subcellularLocation>
</comment>
<comment type="PTM">
    <text evidence="1">Methylated by PrmC. Methylation increases the termination efficiency of RF1.</text>
</comment>
<comment type="similarity">
    <text evidence="1">Belongs to the prokaryotic/mitochondrial release factor family.</text>
</comment>
<sequence>MLDRLQAVEDRYEKLNELLSDPAVINDSNKLREYSKEQSDIQETVEVYREYKDVREQLQDAKAMLEDKLDAEMREMVKEEVSDLEVQEKELSDRLKILLVPKDPNDDKNVIVEIRGAAGGDEAALFAGDLYRMYSRYAEMQGWKTDIIEASYTELGGYKEIIFMINGKGAYAKLKFENGAHRVQRVPETESGGRIHTSTATVAVLPEAEEVEIDIHEKDIRVDTFASSGPGGQSVNTTMSAVRLTHLPTGVVVSCQDEKSQIKNKEKAMKVLRARIYDKFRQEAQAEYDQNRKQAVGTGDRSERIRTYNFPQNRVTDHRIGLTIQKLDQILQGKLDDFINALVMEDQAKKMEAAE</sequence>
<reference key="1">
    <citation type="journal article" date="2008" name="Chem. Biol. Interact.">
        <title>Extending the Bacillus cereus group genomics to putative food-borne pathogens of different toxicity.</title>
        <authorList>
            <person name="Lapidus A."/>
            <person name="Goltsman E."/>
            <person name="Auger S."/>
            <person name="Galleron N."/>
            <person name="Segurens B."/>
            <person name="Dossat C."/>
            <person name="Land M.L."/>
            <person name="Broussolle V."/>
            <person name="Brillard J."/>
            <person name="Guinebretiere M.-H."/>
            <person name="Sanchis V."/>
            <person name="Nguen-the C."/>
            <person name="Lereclus D."/>
            <person name="Richardson P."/>
            <person name="Wincker P."/>
            <person name="Weissenbach J."/>
            <person name="Ehrlich S.D."/>
            <person name="Sorokin A."/>
        </authorList>
    </citation>
    <scope>NUCLEOTIDE SEQUENCE [LARGE SCALE GENOMIC DNA]</scope>
    <source>
        <strain>DSM 22905 / CIP 110041 / 391-98 / NVH 391-98</strain>
    </source>
</reference>
<organism>
    <name type="scientific">Bacillus cytotoxicus (strain DSM 22905 / CIP 110041 / 391-98 / NVH 391-98)</name>
    <dbReference type="NCBI Taxonomy" id="315749"/>
    <lineage>
        <taxon>Bacteria</taxon>
        <taxon>Bacillati</taxon>
        <taxon>Bacillota</taxon>
        <taxon>Bacilli</taxon>
        <taxon>Bacillales</taxon>
        <taxon>Bacillaceae</taxon>
        <taxon>Bacillus</taxon>
        <taxon>Bacillus cereus group</taxon>
    </lineage>
</organism>
<proteinExistence type="inferred from homology"/>